<dbReference type="EC" id="2.7.6.1" evidence="1"/>
<dbReference type="EMBL" id="AE015927">
    <property type="protein sequence ID" value="AAO34838.1"/>
    <property type="molecule type" value="Genomic_DNA"/>
</dbReference>
<dbReference type="SMR" id="Q899I8"/>
<dbReference type="STRING" id="212717.CTC_00188"/>
<dbReference type="KEGG" id="ctc:CTC_00188"/>
<dbReference type="HOGENOM" id="CLU_033546_4_0_9"/>
<dbReference type="UniPathway" id="UPA00087">
    <property type="reaction ID" value="UER00172"/>
</dbReference>
<dbReference type="Proteomes" id="UP000001412">
    <property type="component" value="Chromosome"/>
</dbReference>
<dbReference type="GO" id="GO:0005737">
    <property type="term" value="C:cytoplasm"/>
    <property type="evidence" value="ECO:0007669"/>
    <property type="project" value="UniProtKB-SubCell"/>
</dbReference>
<dbReference type="GO" id="GO:0002189">
    <property type="term" value="C:ribose phosphate diphosphokinase complex"/>
    <property type="evidence" value="ECO:0007669"/>
    <property type="project" value="TreeGrafter"/>
</dbReference>
<dbReference type="GO" id="GO:0005524">
    <property type="term" value="F:ATP binding"/>
    <property type="evidence" value="ECO:0007669"/>
    <property type="project" value="UniProtKB-KW"/>
</dbReference>
<dbReference type="GO" id="GO:0016301">
    <property type="term" value="F:kinase activity"/>
    <property type="evidence" value="ECO:0007669"/>
    <property type="project" value="UniProtKB-KW"/>
</dbReference>
<dbReference type="GO" id="GO:0000287">
    <property type="term" value="F:magnesium ion binding"/>
    <property type="evidence" value="ECO:0007669"/>
    <property type="project" value="UniProtKB-UniRule"/>
</dbReference>
<dbReference type="GO" id="GO:0004749">
    <property type="term" value="F:ribose phosphate diphosphokinase activity"/>
    <property type="evidence" value="ECO:0007669"/>
    <property type="project" value="UniProtKB-UniRule"/>
</dbReference>
<dbReference type="GO" id="GO:0006015">
    <property type="term" value="P:5-phosphoribose 1-diphosphate biosynthetic process"/>
    <property type="evidence" value="ECO:0007669"/>
    <property type="project" value="UniProtKB-UniRule"/>
</dbReference>
<dbReference type="GO" id="GO:0006164">
    <property type="term" value="P:purine nucleotide biosynthetic process"/>
    <property type="evidence" value="ECO:0007669"/>
    <property type="project" value="TreeGrafter"/>
</dbReference>
<dbReference type="GO" id="GO:0009156">
    <property type="term" value="P:ribonucleoside monophosphate biosynthetic process"/>
    <property type="evidence" value="ECO:0007669"/>
    <property type="project" value="InterPro"/>
</dbReference>
<dbReference type="CDD" id="cd06223">
    <property type="entry name" value="PRTases_typeI"/>
    <property type="match status" value="1"/>
</dbReference>
<dbReference type="FunFam" id="3.40.50.2020:FF:000002">
    <property type="entry name" value="Ribose-phosphate pyrophosphokinase"/>
    <property type="match status" value="1"/>
</dbReference>
<dbReference type="FunFam" id="3.40.50.2020:FF:000014">
    <property type="entry name" value="Ribose-phosphate pyrophosphokinase 1"/>
    <property type="match status" value="1"/>
</dbReference>
<dbReference type="Gene3D" id="3.40.50.2020">
    <property type="match status" value="2"/>
</dbReference>
<dbReference type="HAMAP" id="MF_00583_B">
    <property type="entry name" value="RibP_PPkinase_B"/>
    <property type="match status" value="1"/>
</dbReference>
<dbReference type="InterPro" id="IPR000842">
    <property type="entry name" value="PRib_PP_synth_CS"/>
</dbReference>
<dbReference type="InterPro" id="IPR029099">
    <property type="entry name" value="Pribosyltran_N"/>
</dbReference>
<dbReference type="InterPro" id="IPR000836">
    <property type="entry name" value="PRibTrfase_dom"/>
</dbReference>
<dbReference type="InterPro" id="IPR029057">
    <property type="entry name" value="PRTase-like"/>
</dbReference>
<dbReference type="InterPro" id="IPR005946">
    <property type="entry name" value="Rib-P_diPkinase"/>
</dbReference>
<dbReference type="InterPro" id="IPR037515">
    <property type="entry name" value="Rib-P_diPkinase_bac"/>
</dbReference>
<dbReference type="NCBIfam" id="NF002320">
    <property type="entry name" value="PRK01259.1"/>
    <property type="match status" value="1"/>
</dbReference>
<dbReference type="NCBIfam" id="NF002618">
    <property type="entry name" value="PRK02269.1"/>
    <property type="match status" value="1"/>
</dbReference>
<dbReference type="NCBIfam" id="TIGR01251">
    <property type="entry name" value="ribP_PPkin"/>
    <property type="match status" value="1"/>
</dbReference>
<dbReference type="PANTHER" id="PTHR10210">
    <property type="entry name" value="RIBOSE-PHOSPHATE DIPHOSPHOKINASE FAMILY MEMBER"/>
    <property type="match status" value="1"/>
</dbReference>
<dbReference type="PANTHER" id="PTHR10210:SF41">
    <property type="entry name" value="RIBOSE-PHOSPHATE PYROPHOSPHOKINASE 1, CHLOROPLASTIC"/>
    <property type="match status" value="1"/>
</dbReference>
<dbReference type="Pfam" id="PF14572">
    <property type="entry name" value="Pribosyl_synth"/>
    <property type="match status" value="1"/>
</dbReference>
<dbReference type="Pfam" id="PF13793">
    <property type="entry name" value="Pribosyltran_N"/>
    <property type="match status" value="1"/>
</dbReference>
<dbReference type="SMART" id="SM01400">
    <property type="entry name" value="Pribosyltran_N"/>
    <property type="match status" value="1"/>
</dbReference>
<dbReference type="SUPFAM" id="SSF53271">
    <property type="entry name" value="PRTase-like"/>
    <property type="match status" value="1"/>
</dbReference>
<dbReference type="PROSITE" id="PS00114">
    <property type="entry name" value="PRPP_SYNTHASE"/>
    <property type="match status" value="1"/>
</dbReference>
<accession>Q899I8</accession>
<reference key="1">
    <citation type="journal article" date="2003" name="Proc. Natl. Acad. Sci. U.S.A.">
        <title>The genome sequence of Clostridium tetani, the causative agent of tetanus disease.</title>
        <authorList>
            <person name="Brueggemann H."/>
            <person name="Baeumer S."/>
            <person name="Fricke W.F."/>
            <person name="Wiezer A."/>
            <person name="Liesegang H."/>
            <person name="Decker I."/>
            <person name="Herzberg C."/>
            <person name="Martinez-Arias R."/>
            <person name="Merkl R."/>
            <person name="Henne A."/>
            <person name="Gottschalk G."/>
        </authorList>
    </citation>
    <scope>NUCLEOTIDE SEQUENCE [LARGE SCALE GENOMIC DNA]</scope>
    <source>
        <strain>Massachusetts / E88</strain>
    </source>
</reference>
<sequence>MVMIHERKSLKIFAGNSNDKLAKDIADIVGVPLGSAEVGRFSDGEITVNINETVRGIDAFIIQSTSAPVNDNLMELLIMIDAFKRASAGRITAVIPYYGYARQDRKTKARDPITAKLVADILTAAGADRVLTMDLHASQIQGYFDIPLDHLLGVPILGKYFAENGFDQREDVVVVSPDLGSVTRARKFADRIHAPIAIIDKRRPKPNVSEVMHIIGDIKDKTCILIDDMIDTAGTITNGANALVERGAKDVYACCTHAVLSGPAMERIDNSVIKELITLNTIDISKIKPSDKIKVLSVAPVFAEAIRRIYEEISVSKLFD</sequence>
<name>KPRS_CLOTE</name>
<protein>
    <recommendedName>
        <fullName evidence="1">Ribose-phosphate pyrophosphokinase</fullName>
        <shortName evidence="1">RPPK</shortName>
        <ecNumber evidence="1">2.7.6.1</ecNumber>
    </recommendedName>
    <alternativeName>
        <fullName evidence="1">5-phospho-D-ribosyl alpha-1-diphosphate synthase</fullName>
    </alternativeName>
    <alternativeName>
        <fullName evidence="1">Phosphoribosyl diphosphate synthase</fullName>
    </alternativeName>
    <alternativeName>
        <fullName evidence="1">Phosphoribosyl pyrophosphate synthase</fullName>
        <shortName evidence="1">P-Rib-PP synthase</shortName>
        <shortName evidence="1">PRPP synthase</shortName>
        <shortName evidence="1">PRPPase</shortName>
    </alternativeName>
</protein>
<comment type="function">
    <text evidence="1">Involved in the biosynthesis of the central metabolite phospho-alpha-D-ribosyl-1-pyrophosphate (PRPP) via the transfer of pyrophosphoryl group from ATP to 1-hydroxyl of ribose-5-phosphate (Rib-5-P).</text>
</comment>
<comment type="catalytic activity">
    <reaction evidence="1">
        <text>D-ribose 5-phosphate + ATP = 5-phospho-alpha-D-ribose 1-diphosphate + AMP + H(+)</text>
        <dbReference type="Rhea" id="RHEA:15609"/>
        <dbReference type="ChEBI" id="CHEBI:15378"/>
        <dbReference type="ChEBI" id="CHEBI:30616"/>
        <dbReference type="ChEBI" id="CHEBI:58017"/>
        <dbReference type="ChEBI" id="CHEBI:78346"/>
        <dbReference type="ChEBI" id="CHEBI:456215"/>
        <dbReference type="EC" id="2.7.6.1"/>
    </reaction>
</comment>
<comment type="cofactor">
    <cofactor evidence="1">
        <name>Mg(2+)</name>
        <dbReference type="ChEBI" id="CHEBI:18420"/>
    </cofactor>
    <text evidence="1">Binds 2 Mg(2+) ions per subunit.</text>
</comment>
<comment type="pathway">
    <text evidence="1">Metabolic intermediate biosynthesis; 5-phospho-alpha-D-ribose 1-diphosphate biosynthesis; 5-phospho-alpha-D-ribose 1-diphosphate from D-ribose 5-phosphate (route I): step 1/1.</text>
</comment>
<comment type="subunit">
    <text evidence="1">Homohexamer.</text>
</comment>
<comment type="subcellular location">
    <subcellularLocation>
        <location evidence="1">Cytoplasm</location>
    </subcellularLocation>
</comment>
<comment type="similarity">
    <text evidence="1">Belongs to the ribose-phosphate pyrophosphokinase family. Class I subfamily.</text>
</comment>
<evidence type="ECO:0000255" key="1">
    <source>
        <dbReference type="HAMAP-Rule" id="MF_00583"/>
    </source>
</evidence>
<proteinExistence type="inferred from homology"/>
<gene>
    <name evidence="1" type="primary">prs</name>
    <name type="ordered locus">CTC_00188</name>
</gene>
<organism>
    <name type="scientific">Clostridium tetani (strain Massachusetts / E88)</name>
    <dbReference type="NCBI Taxonomy" id="212717"/>
    <lineage>
        <taxon>Bacteria</taxon>
        <taxon>Bacillati</taxon>
        <taxon>Bacillota</taxon>
        <taxon>Clostridia</taxon>
        <taxon>Eubacteriales</taxon>
        <taxon>Clostridiaceae</taxon>
        <taxon>Clostridium</taxon>
    </lineage>
</organism>
<feature type="chain" id="PRO_0000141128" description="Ribose-phosphate pyrophosphokinase">
    <location>
        <begin position="1"/>
        <end position="320"/>
    </location>
</feature>
<feature type="active site" evidence="1">
    <location>
        <position position="201"/>
    </location>
</feature>
<feature type="binding site" evidence="1">
    <location>
        <begin position="43"/>
        <end position="45"/>
    </location>
    <ligand>
        <name>ATP</name>
        <dbReference type="ChEBI" id="CHEBI:30616"/>
    </ligand>
</feature>
<feature type="binding site" evidence="1">
    <location>
        <begin position="102"/>
        <end position="103"/>
    </location>
    <ligand>
        <name>ATP</name>
        <dbReference type="ChEBI" id="CHEBI:30616"/>
    </ligand>
</feature>
<feature type="binding site" evidence="1">
    <location>
        <position position="136"/>
    </location>
    <ligand>
        <name>Mg(2+)</name>
        <dbReference type="ChEBI" id="CHEBI:18420"/>
        <label>1</label>
    </ligand>
</feature>
<feature type="binding site" evidence="1">
    <location>
        <position position="178"/>
    </location>
    <ligand>
        <name>Mg(2+)</name>
        <dbReference type="ChEBI" id="CHEBI:18420"/>
        <label>2</label>
    </ligand>
</feature>
<feature type="binding site" evidence="1">
    <location>
        <position position="203"/>
    </location>
    <ligand>
        <name>D-ribose 5-phosphate</name>
        <dbReference type="ChEBI" id="CHEBI:78346"/>
    </ligand>
</feature>
<feature type="binding site" evidence="1">
    <location>
        <position position="227"/>
    </location>
    <ligand>
        <name>D-ribose 5-phosphate</name>
        <dbReference type="ChEBI" id="CHEBI:78346"/>
    </ligand>
</feature>
<feature type="binding site" evidence="1">
    <location>
        <begin position="231"/>
        <end position="235"/>
    </location>
    <ligand>
        <name>D-ribose 5-phosphate</name>
        <dbReference type="ChEBI" id="CHEBI:78346"/>
    </ligand>
</feature>
<keyword id="KW-0067">ATP-binding</keyword>
<keyword id="KW-0963">Cytoplasm</keyword>
<keyword id="KW-0418">Kinase</keyword>
<keyword id="KW-0460">Magnesium</keyword>
<keyword id="KW-0479">Metal-binding</keyword>
<keyword id="KW-0545">Nucleotide biosynthesis</keyword>
<keyword id="KW-0547">Nucleotide-binding</keyword>
<keyword id="KW-1185">Reference proteome</keyword>
<keyword id="KW-0808">Transferase</keyword>